<reference key="1">
    <citation type="journal article" date="2001" name="J. Bacteriol.">
        <title>Genome of the bacterium Streptococcus pneumoniae strain R6.</title>
        <authorList>
            <person name="Hoskins J."/>
            <person name="Alborn W.E. Jr."/>
            <person name="Arnold J."/>
            <person name="Blaszczak L.C."/>
            <person name="Burgett S."/>
            <person name="DeHoff B.S."/>
            <person name="Estrem S.T."/>
            <person name="Fritz L."/>
            <person name="Fu D.-J."/>
            <person name="Fuller W."/>
            <person name="Geringer C."/>
            <person name="Gilmour R."/>
            <person name="Glass J.S."/>
            <person name="Khoja H."/>
            <person name="Kraft A.R."/>
            <person name="Lagace R.E."/>
            <person name="LeBlanc D.J."/>
            <person name="Lee L.N."/>
            <person name="Lefkowitz E.J."/>
            <person name="Lu J."/>
            <person name="Matsushima P."/>
            <person name="McAhren S.M."/>
            <person name="McHenney M."/>
            <person name="McLeaster K."/>
            <person name="Mundy C.W."/>
            <person name="Nicas T.I."/>
            <person name="Norris F.H."/>
            <person name="O'Gara M."/>
            <person name="Peery R.B."/>
            <person name="Robertson G.T."/>
            <person name="Rockey P."/>
            <person name="Sun P.-M."/>
            <person name="Winkler M.E."/>
            <person name="Yang Y."/>
            <person name="Young-Bellido M."/>
            <person name="Zhao G."/>
            <person name="Zook C.A."/>
            <person name="Baltz R.H."/>
            <person name="Jaskunas S.R."/>
            <person name="Rosteck P.R. Jr."/>
            <person name="Skatrud P.L."/>
            <person name="Glass J.I."/>
        </authorList>
    </citation>
    <scope>NUCLEOTIDE SEQUENCE [LARGE SCALE GENOMIC DNA]</scope>
    <source>
        <strain>ATCC BAA-255 / R6</strain>
    </source>
</reference>
<reference key="2">
    <citation type="journal article" date="2015" name="PLoS Genet.">
        <title>RecFOR is not required for pneumococcal transformation but together with XerS for resolution of chromosome dimers frequently formed in the process.</title>
        <authorList>
            <person name="Johnston C."/>
            <person name="Mortier-Barriere I."/>
            <person name="Granadel C."/>
            <person name="Polard P."/>
            <person name="Martin B."/>
            <person name="Claverys J.P."/>
        </authorList>
    </citation>
    <scope>FUNCTION</scope>
    <scope>DISRUPTION PHENOTYPE</scope>
</reference>
<protein>
    <recommendedName>
        <fullName evidence="1">Recombination protein RecR</fullName>
    </recommendedName>
</protein>
<comment type="function">
    <text evidence="1 2">May play a role in DNA repair. It seems to be involved in an RecBC-independent recombinational process of DNA repair. It may act with RecF and RecO (By similarity). Plays no role in chromosomal or plasmid transformation but is required for resolution of chromosome dimers occurring as intermediates in the formation of merodiploids by transformation (PubMed:25569614).</text>
</comment>
<comment type="disruption phenotype">
    <text evidence="2">Mutant is sensitive to the alkylating agent methyl methanesulfonate and the DNA cross-linking agent mitomycin C.</text>
</comment>
<comment type="similarity">
    <text evidence="1">Belongs to the RecR family.</text>
</comment>
<accession>P0A454</accession>
<accession>Q9ZHC4</accession>
<evidence type="ECO:0000255" key="1">
    <source>
        <dbReference type="HAMAP-Rule" id="MF_00017"/>
    </source>
</evidence>
<evidence type="ECO:0000269" key="2">
    <source>
    </source>
</evidence>
<feature type="chain" id="PRO_0000190399" description="Recombination protein RecR">
    <location>
        <begin position="1"/>
        <end position="198"/>
    </location>
</feature>
<feature type="domain" description="Toprim" evidence="1">
    <location>
        <begin position="80"/>
        <end position="175"/>
    </location>
</feature>
<feature type="zinc finger region" description="C4-type" evidence="1">
    <location>
        <begin position="57"/>
        <end position="72"/>
    </location>
</feature>
<organism>
    <name type="scientific">Streptococcus pneumoniae (strain ATCC BAA-255 / R6)</name>
    <dbReference type="NCBI Taxonomy" id="171101"/>
    <lineage>
        <taxon>Bacteria</taxon>
        <taxon>Bacillati</taxon>
        <taxon>Bacillota</taxon>
        <taxon>Bacilli</taxon>
        <taxon>Lactobacillales</taxon>
        <taxon>Streptococcaceae</taxon>
        <taxon>Streptococcus</taxon>
    </lineage>
</organism>
<keyword id="KW-0227">DNA damage</keyword>
<keyword id="KW-0233">DNA recombination</keyword>
<keyword id="KW-0234">DNA repair</keyword>
<keyword id="KW-0479">Metal-binding</keyword>
<keyword id="KW-1185">Reference proteome</keyword>
<keyword id="KW-0862">Zinc</keyword>
<keyword id="KW-0863">Zinc-finger</keyword>
<proteinExistence type="inferred from homology"/>
<gene>
    <name evidence="1" type="primary">recR</name>
    <name type="synonym">recM</name>
    <name type="ordered locus">spr1516</name>
</gene>
<sequence>MLYPTPIAKLIDSYSKLPGIGIKTATRLAFYTIGMSADDVNEFAKNLLSAKRELTYCSICGRLTDDDPCSICTDPTRDQTTILVLEDSRDVAAMENIQEYHGLYHVLHGLISPMNGISPDDINLKSLMTRLMDSEVSEVIVATNATADGEATSMYLSRLLKPAGIKVTRLARGLAVGADIEYADEVTLLRAIENRTEL</sequence>
<dbReference type="EMBL" id="AE007317">
    <property type="protein sequence ID" value="AAL00320.1"/>
    <property type="molecule type" value="Genomic_DNA"/>
</dbReference>
<dbReference type="PIR" id="C98061">
    <property type="entry name" value="C98061"/>
</dbReference>
<dbReference type="RefSeq" id="NP_359109.1">
    <property type="nucleotide sequence ID" value="NC_003098.1"/>
</dbReference>
<dbReference type="RefSeq" id="WP_000966743.1">
    <property type="nucleotide sequence ID" value="NC_003098.1"/>
</dbReference>
<dbReference type="SMR" id="P0A454"/>
<dbReference type="STRING" id="171101.spr1516"/>
<dbReference type="GeneID" id="45653117"/>
<dbReference type="KEGG" id="spr:spr1516"/>
<dbReference type="PATRIC" id="fig|171101.6.peg.1636"/>
<dbReference type="eggNOG" id="COG0353">
    <property type="taxonomic scope" value="Bacteria"/>
</dbReference>
<dbReference type="HOGENOM" id="CLU_060739_1_0_9"/>
<dbReference type="Proteomes" id="UP000000586">
    <property type="component" value="Chromosome"/>
</dbReference>
<dbReference type="GO" id="GO:0003677">
    <property type="term" value="F:DNA binding"/>
    <property type="evidence" value="ECO:0007669"/>
    <property type="project" value="UniProtKB-UniRule"/>
</dbReference>
<dbReference type="GO" id="GO:0008270">
    <property type="term" value="F:zinc ion binding"/>
    <property type="evidence" value="ECO:0007669"/>
    <property type="project" value="UniProtKB-KW"/>
</dbReference>
<dbReference type="GO" id="GO:0006302">
    <property type="term" value="P:double-strand break repair"/>
    <property type="evidence" value="ECO:0000318"/>
    <property type="project" value="GO_Central"/>
</dbReference>
<dbReference type="GO" id="GO:0000725">
    <property type="term" value="P:recombinational repair"/>
    <property type="evidence" value="ECO:0000318"/>
    <property type="project" value="GO_Central"/>
</dbReference>
<dbReference type="CDD" id="cd01025">
    <property type="entry name" value="TOPRIM_recR"/>
    <property type="match status" value="1"/>
</dbReference>
<dbReference type="Gene3D" id="3.30.60.80">
    <property type="match status" value="1"/>
</dbReference>
<dbReference type="Gene3D" id="3.40.1360.10">
    <property type="match status" value="1"/>
</dbReference>
<dbReference type="Gene3D" id="6.10.250.240">
    <property type="match status" value="1"/>
</dbReference>
<dbReference type="Gene3D" id="1.10.8.420">
    <property type="entry name" value="RecR Domain 1"/>
    <property type="match status" value="1"/>
</dbReference>
<dbReference type="HAMAP" id="MF_00017">
    <property type="entry name" value="RecR"/>
    <property type="match status" value="1"/>
</dbReference>
<dbReference type="InterPro" id="IPR000093">
    <property type="entry name" value="DNA_Rcmb_RecR"/>
</dbReference>
<dbReference type="InterPro" id="IPR023627">
    <property type="entry name" value="Rcmb_RecR"/>
</dbReference>
<dbReference type="InterPro" id="IPR015967">
    <property type="entry name" value="Rcmb_RecR_Znf"/>
</dbReference>
<dbReference type="InterPro" id="IPR006171">
    <property type="entry name" value="TOPRIM_dom"/>
</dbReference>
<dbReference type="InterPro" id="IPR034137">
    <property type="entry name" value="TOPRIM_RecR"/>
</dbReference>
<dbReference type="NCBIfam" id="TIGR00615">
    <property type="entry name" value="recR"/>
    <property type="match status" value="1"/>
</dbReference>
<dbReference type="PANTHER" id="PTHR30446">
    <property type="entry name" value="RECOMBINATION PROTEIN RECR"/>
    <property type="match status" value="1"/>
</dbReference>
<dbReference type="PANTHER" id="PTHR30446:SF0">
    <property type="entry name" value="RECOMBINATION PROTEIN RECR"/>
    <property type="match status" value="1"/>
</dbReference>
<dbReference type="Pfam" id="PF21175">
    <property type="entry name" value="RecR_C"/>
    <property type="match status" value="1"/>
</dbReference>
<dbReference type="Pfam" id="PF21176">
    <property type="entry name" value="RecR_HhH"/>
    <property type="match status" value="1"/>
</dbReference>
<dbReference type="Pfam" id="PF02132">
    <property type="entry name" value="RecR_ZnF"/>
    <property type="match status" value="1"/>
</dbReference>
<dbReference type="Pfam" id="PF13662">
    <property type="entry name" value="Toprim_4"/>
    <property type="match status" value="1"/>
</dbReference>
<dbReference type="SMART" id="SM00493">
    <property type="entry name" value="TOPRIM"/>
    <property type="match status" value="1"/>
</dbReference>
<dbReference type="SUPFAM" id="SSF111304">
    <property type="entry name" value="Recombination protein RecR"/>
    <property type="match status" value="1"/>
</dbReference>
<dbReference type="PROSITE" id="PS01300">
    <property type="entry name" value="RECR"/>
    <property type="match status" value="1"/>
</dbReference>
<dbReference type="PROSITE" id="PS50880">
    <property type="entry name" value="TOPRIM"/>
    <property type="match status" value="1"/>
</dbReference>
<name>RECR_STRR6</name>